<dbReference type="EC" id="3.5.1.5" evidence="1"/>
<dbReference type="EMBL" id="CP001291">
    <property type="protein sequence ID" value="ACK72775.1"/>
    <property type="molecule type" value="Genomic_DNA"/>
</dbReference>
<dbReference type="RefSeq" id="WP_015956359.1">
    <property type="nucleotide sequence ID" value="NC_011729.1"/>
</dbReference>
<dbReference type="SMR" id="B7K906"/>
<dbReference type="STRING" id="65393.PCC7424_4411"/>
<dbReference type="KEGG" id="cyc:PCC7424_4411"/>
<dbReference type="eggNOG" id="COG0831">
    <property type="taxonomic scope" value="Bacteria"/>
</dbReference>
<dbReference type="HOGENOM" id="CLU_145825_1_0_3"/>
<dbReference type="OrthoDB" id="9793527at2"/>
<dbReference type="UniPathway" id="UPA00258">
    <property type="reaction ID" value="UER00370"/>
</dbReference>
<dbReference type="Proteomes" id="UP000002384">
    <property type="component" value="Chromosome"/>
</dbReference>
<dbReference type="GO" id="GO:0005737">
    <property type="term" value="C:cytoplasm"/>
    <property type="evidence" value="ECO:0007669"/>
    <property type="project" value="UniProtKB-SubCell"/>
</dbReference>
<dbReference type="GO" id="GO:0016151">
    <property type="term" value="F:nickel cation binding"/>
    <property type="evidence" value="ECO:0007669"/>
    <property type="project" value="InterPro"/>
</dbReference>
<dbReference type="GO" id="GO:0009039">
    <property type="term" value="F:urease activity"/>
    <property type="evidence" value="ECO:0007669"/>
    <property type="project" value="UniProtKB-UniRule"/>
</dbReference>
<dbReference type="GO" id="GO:0043419">
    <property type="term" value="P:urea catabolic process"/>
    <property type="evidence" value="ECO:0007669"/>
    <property type="project" value="UniProtKB-UniRule"/>
</dbReference>
<dbReference type="CDD" id="cd00390">
    <property type="entry name" value="Urease_gamma"/>
    <property type="match status" value="1"/>
</dbReference>
<dbReference type="Gene3D" id="3.30.280.10">
    <property type="entry name" value="Urease, gamma-like subunit"/>
    <property type="match status" value="1"/>
</dbReference>
<dbReference type="HAMAP" id="MF_00739">
    <property type="entry name" value="Urease_gamma"/>
    <property type="match status" value="1"/>
</dbReference>
<dbReference type="InterPro" id="IPR012010">
    <property type="entry name" value="Urease_gamma"/>
</dbReference>
<dbReference type="InterPro" id="IPR002026">
    <property type="entry name" value="Urease_gamma/gamma-beta_su"/>
</dbReference>
<dbReference type="InterPro" id="IPR036463">
    <property type="entry name" value="Urease_gamma_sf"/>
</dbReference>
<dbReference type="InterPro" id="IPR050069">
    <property type="entry name" value="Urease_subunit"/>
</dbReference>
<dbReference type="NCBIfam" id="NF009712">
    <property type="entry name" value="PRK13241.1"/>
    <property type="match status" value="1"/>
</dbReference>
<dbReference type="NCBIfam" id="TIGR00193">
    <property type="entry name" value="urease_gam"/>
    <property type="match status" value="1"/>
</dbReference>
<dbReference type="PANTHER" id="PTHR33569">
    <property type="entry name" value="UREASE"/>
    <property type="match status" value="1"/>
</dbReference>
<dbReference type="PANTHER" id="PTHR33569:SF1">
    <property type="entry name" value="UREASE"/>
    <property type="match status" value="1"/>
</dbReference>
<dbReference type="Pfam" id="PF00547">
    <property type="entry name" value="Urease_gamma"/>
    <property type="match status" value="1"/>
</dbReference>
<dbReference type="PIRSF" id="PIRSF001223">
    <property type="entry name" value="Urease_gamma"/>
    <property type="match status" value="1"/>
</dbReference>
<dbReference type="SUPFAM" id="SSF54111">
    <property type="entry name" value="Urease, gamma-subunit"/>
    <property type="match status" value="1"/>
</dbReference>
<keyword id="KW-0963">Cytoplasm</keyword>
<keyword id="KW-0378">Hydrolase</keyword>
<keyword id="KW-1185">Reference proteome</keyword>
<comment type="catalytic activity">
    <reaction evidence="1">
        <text>urea + 2 H2O + H(+) = hydrogencarbonate + 2 NH4(+)</text>
        <dbReference type="Rhea" id="RHEA:20557"/>
        <dbReference type="ChEBI" id="CHEBI:15377"/>
        <dbReference type="ChEBI" id="CHEBI:15378"/>
        <dbReference type="ChEBI" id="CHEBI:16199"/>
        <dbReference type="ChEBI" id="CHEBI:17544"/>
        <dbReference type="ChEBI" id="CHEBI:28938"/>
        <dbReference type="EC" id="3.5.1.5"/>
    </reaction>
</comment>
<comment type="pathway">
    <text evidence="1">Nitrogen metabolism; urea degradation; CO(2) and NH(3) from urea (urease route): step 1/1.</text>
</comment>
<comment type="subunit">
    <text evidence="1">Heterotrimer of UreA (gamma), UreB (beta) and UreC (alpha) subunits. Three heterotrimers associate to form the active enzyme.</text>
</comment>
<comment type="subcellular location">
    <subcellularLocation>
        <location evidence="1">Cytoplasm</location>
    </subcellularLocation>
</comment>
<comment type="similarity">
    <text evidence="1">Belongs to the urease gamma subunit family.</text>
</comment>
<reference key="1">
    <citation type="journal article" date="2011" name="MBio">
        <title>Novel metabolic attributes of the genus Cyanothece, comprising a group of unicellular nitrogen-fixing Cyanobacteria.</title>
        <authorList>
            <person name="Bandyopadhyay A."/>
            <person name="Elvitigala T."/>
            <person name="Welsh E."/>
            <person name="Stockel J."/>
            <person name="Liberton M."/>
            <person name="Min H."/>
            <person name="Sherman L.A."/>
            <person name="Pakrasi H.B."/>
        </authorList>
    </citation>
    <scope>NUCLEOTIDE SEQUENCE [LARGE SCALE GENOMIC DNA]</scope>
    <source>
        <strain>PCC 7424</strain>
    </source>
</reference>
<feature type="chain" id="PRO_1000199860" description="Urease subunit gamma">
    <location>
        <begin position="1"/>
        <end position="112"/>
    </location>
</feature>
<name>URE3_GLOC7</name>
<proteinExistence type="inferred from homology"/>
<evidence type="ECO:0000255" key="1">
    <source>
        <dbReference type="HAMAP-Rule" id="MF_00739"/>
    </source>
</evidence>
<accession>B7K906</accession>
<sequence length="112" mass="12262">MQLSPQEKDKLLIFTAALVAERRRARGLKLNYPEAVAYISAAILEGAREGRSVEELMSYGTTLLGKDDVMEGVPEMIHEVQIEATFPDGTKLVTVHNPIRLSVVPLVGSSQV</sequence>
<gene>
    <name evidence="1" type="primary">ureA</name>
    <name type="ordered locus">PCC7424_4411</name>
</gene>
<protein>
    <recommendedName>
        <fullName evidence="1">Urease subunit gamma</fullName>
        <ecNumber evidence="1">3.5.1.5</ecNumber>
    </recommendedName>
    <alternativeName>
        <fullName evidence="1">Urea amidohydrolase subunit gamma</fullName>
    </alternativeName>
</protein>
<organism>
    <name type="scientific">Gloeothece citriformis (strain PCC 7424)</name>
    <name type="common">Cyanothece sp. (strain PCC 7424)</name>
    <dbReference type="NCBI Taxonomy" id="65393"/>
    <lineage>
        <taxon>Bacteria</taxon>
        <taxon>Bacillati</taxon>
        <taxon>Cyanobacteriota</taxon>
        <taxon>Cyanophyceae</taxon>
        <taxon>Oscillatoriophycideae</taxon>
        <taxon>Chroococcales</taxon>
        <taxon>Aphanothecaceae</taxon>
        <taxon>Gloeothece</taxon>
        <taxon>Gloeothece citriformis</taxon>
    </lineage>
</organism>